<organismHost>
    <name type="scientific">Sigmodon hispidus</name>
    <name type="common">Hispid cotton rat</name>
    <dbReference type="NCBI Taxonomy" id="42415"/>
</organismHost>
<keyword id="KW-1015">Disulfide bond</keyword>
<keyword id="KW-1170">Fusion of virus membrane with host endosomal membrane</keyword>
<keyword id="KW-1168">Fusion of virus membrane with host membrane</keyword>
<keyword id="KW-0325">Glycoprotein</keyword>
<keyword id="KW-1032">Host cell membrane</keyword>
<keyword id="KW-1038">Host endoplasmic reticulum</keyword>
<keyword id="KW-1040">Host Golgi apparatus</keyword>
<keyword id="KW-1043">Host membrane</keyword>
<keyword id="KW-0945">Host-virus interaction</keyword>
<keyword id="KW-0449">Lipoprotein</keyword>
<keyword id="KW-0472">Membrane</keyword>
<keyword id="KW-0479">Metal-binding</keyword>
<keyword id="KW-0519">Myristate</keyword>
<keyword id="KW-0812">Transmembrane</keyword>
<keyword id="KW-1133">Transmembrane helix</keyword>
<keyword id="KW-1161">Viral attachment to host cell</keyword>
<keyword id="KW-0261">Viral envelope protein</keyword>
<keyword id="KW-1162">Viral penetration into host cytoplasm</keyword>
<keyword id="KW-0946">Virion</keyword>
<keyword id="KW-1164">Virus endocytosis by host</keyword>
<keyword id="KW-1160">Virus entry into host cell</keyword>
<keyword id="KW-0862">Zinc</keyword>
<name>GLYC_TAMVU</name>
<evidence type="ECO:0000250" key="1">
    <source>
        <dbReference type="UniProtKB" id="P26313"/>
    </source>
</evidence>
<evidence type="ECO:0000255" key="2">
    <source>
        <dbReference type="HAMAP-Rule" id="MF_04084"/>
    </source>
</evidence>
<comment type="function">
    <molecule>Stable signal peptide</molecule>
    <text evidence="2">Functions as a cleaved signal peptide that is retained as the third component of the GP complex (GP-C). Helps to stabilize the spike complex in its native conformation. The SSP is required for efficient glycoprotein expression, post-translational maturation cleavage of G1 and G2, glycoprotein transport to the cell surface plasma membrane, formation of infectious virus particles, and acid pH-dependent glycoprotein-mediated cell fusion.</text>
</comment>
<comment type="function">
    <molecule>Glycoprotein G1</molecule>
    <text evidence="2">Forms the virion spikes together with glycoprotein G2. The glycoprotein spike trimers are connected to the underlying matrix. Interacts with the host receptor leading to virus endocytosis.</text>
</comment>
<comment type="function">
    <molecule>Glycoprotein G2</molecule>
    <text evidence="2">Forms the virion spikes together with glycoprotein G1. The glycoprotein spike trimers are connected to the underlying matrix. Class I viral fusion protein that directs fusion of viral and host endosomal membranes, leading to delivery of the nucleocapsid into the cytoplasm. Membrane fusion is mediated by irreversible conformational changes induced by acidification.</text>
</comment>
<comment type="subunit">
    <molecule>Stable signal peptide</molecule>
    <text evidence="2">Interacts with glycoprotein G2. Part of the GP complex (GP-C) together with glycoprotein G1 and glycoprotein G2. The GP-complex interacts with protein Z, which interacts with ribonucleocapsid; these interactions may induce virion budding.</text>
</comment>
<comment type="subunit">
    <molecule>Glycoprotein G1</molecule>
    <text evidence="2">Homotrimer; disulfide-linked. In pre-fusion state, G1 homotrimers bind G2 homotrimers via ionic interactions. Part of the GP complex (GP-C) together with glycoprotein G2 and the stable signal peptide. The GP-complex interacts with protein Z, which interacts with ribonucleocapsid; these interactions may induce virion budding.</text>
</comment>
<comment type="subunit">
    <molecule>Glycoprotein G2</molecule>
    <text evidence="2">Homotrimer. Interacts with the stable signal peptide. In pre-fusion state, G2 homotrimers bind G1 homotrimers via ionic interactions. Part of the GP complex (GP-C) together with glycoprotein G1 and the stable signal peptide. Acidification in the endosome triggers rearrangements, which ultimately leads to a 6 helix bundle formed by the two heptad repeat domains (HR1 and HR2) in post-fusion state. The GP-complex interacts with protein Z, which interacts with ribonucleocapsid; these interactions may induce virion budding.</text>
</comment>
<comment type="subcellular location">
    <molecule>Stable signal peptide</molecule>
    <subcellularLocation>
        <location evidence="2">Virion membrane</location>
        <topology evidence="2">Single-pass type II membrane protein</topology>
    </subcellularLocation>
    <subcellularLocation>
        <location evidence="2">Host endoplasmic reticulum membrane</location>
        <topology evidence="2">Single-pass type II membrane protein</topology>
    </subcellularLocation>
    <subcellularLocation>
        <location evidence="2">Host Golgi apparatus membrane</location>
        <topology evidence="2">Single-pass type II membrane protein</topology>
    </subcellularLocation>
    <subcellularLocation>
        <location evidence="2">Host cell membrane</location>
        <topology evidence="2">Single-pass type II membrane protein</topology>
    </subcellularLocation>
</comment>
<comment type="subcellular location">
    <molecule>Glycoprotein G1</molecule>
    <subcellularLocation>
        <location evidence="2">Virion membrane</location>
        <topology evidence="2">Peripheral membrane protein</topology>
    </subcellularLocation>
    <subcellularLocation>
        <location evidence="2">Host endoplasmic reticulum membrane</location>
        <topology evidence="2">Peripheral membrane protein</topology>
    </subcellularLocation>
    <subcellularLocation>
        <location evidence="2">Host Golgi apparatus membrane</location>
        <topology evidence="2">Peripheral membrane protein</topology>
    </subcellularLocation>
    <subcellularLocation>
        <location evidence="2">Host cell membrane</location>
        <topology evidence="2">Peripheral membrane protein</topology>
    </subcellularLocation>
</comment>
<comment type="subcellular location">
    <molecule>Glycoprotein G2</molecule>
    <subcellularLocation>
        <location evidence="2">Virion membrane</location>
        <topology evidence="2">Single-pass membrane protein</topology>
    </subcellularLocation>
    <subcellularLocation>
        <location evidence="2">Host endoplasmic reticulum membrane</location>
        <topology evidence="2">Single-pass membrane protein</topology>
    </subcellularLocation>
    <subcellularLocation>
        <location evidence="2">Host Golgi apparatus membrane</location>
        <topology evidence="2">Single-pass membrane protein</topology>
    </subcellularLocation>
    <subcellularLocation>
        <location evidence="2">Host cell membrane</location>
        <topology evidence="2">Single-pass membrane protein</topology>
    </subcellularLocation>
    <text evidence="2">Binding to the stable signal peptide masks endogenous ER localization signals in the cytoplasmic domain of G2 to ensure that only the fully assembled, tripartite GP complex is transported for virion assembly.</text>
</comment>
<comment type="domain">
    <molecule>Stable signal peptide</molecule>
    <text evidence="2">The N-terminus is localized at the extracellular side of the GP-C, with a part embedded in the membrane probably.</text>
</comment>
<comment type="domain">
    <molecule>Glycoprotein G2</molecule>
    <text evidence="2">Contains 1 fusion peptide at the N-terminus, 2 heptad repeats domains HR1 and HR2 and, at the C-terminus, a cytoplasmic domain that plays a role in ER location. Also contains a zinc-binding domain that allows SSP retention in the GPC complex by accepting a cysteine from SSP as the fourth ligand.</text>
</comment>
<comment type="PTM">
    <molecule>Pre-glycoprotein polyprotein GP complex</molecule>
    <text evidence="2">Specific enzymatic cleavages in vivo yield mature proteins. GP-C polyprotein is cleaved in the endoplasmic reticulum by the host protease MBTPS1. Only cleaved glycoprotein is incorporated into virions.</text>
</comment>
<comment type="PTM">
    <molecule>Stable signal peptide</molecule>
    <text evidence="2">The SSP remains stably associated with the GP complex following cleavage by signal peptidase and plays crucial roles in the trafficking of GP through the secretory pathway.</text>
</comment>
<comment type="PTM">
    <molecule>Stable signal peptide</molecule>
    <text evidence="2">Myristoylation is necessary for GP2-mediated fusion activity.</text>
</comment>
<comment type="similarity">
    <text evidence="2">Belongs to the arenaviridae GPC protein family.</text>
</comment>
<feature type="initiator methionine" description="Removed; by host" evidence="2">
    <location>
        <position position="1"/>
    </location>
</feature>
<feature type="chain" id="PRO_0000361624" description="Pre-glycoprotein polyprotein GP complex" evidence="2">
    <location>
        <begin position="2"/>
        <end position="485"/>
    </location>
</feature>
<feature type="chain" id="PRO_0000361625" description="Stable signal peptide" evidence="2">
    <location>
        <begin position="2"/>
        <end position="58"/>
    </location>
</feature>
<feature type="chain" id="PRO_0000361626" description="Glycoprotein G1" evidence="2">
    <location>
        <begin position="59"/>
        <end position="251"/>
    </location>
</feature>
<feature type="chain" id="PRO_0000361627" description="Glycoprotein G2" evidence="2">
    <location>
        <begin position="252"/>
        <end position="485"/>
    </location>
</feature>
<feature type="topological domain" description="Extracellular" evidence="2">
    <location>
        <begin position="2"/>
        <end position="17"/>
    </location>
</feature>
<feature type="transmembrane region" description="Helical" evidence="2">
    <location>
        <begin position="18"/>
        <end position="33"/>
    </location>
</feature>
<feature type="topological domain" description="Cytoplasmic" evidence="2">
    <location>
        <begin position="34"/>
        <end position="58"/>
    </location>
</feature>
<feature type="topological domain" description="Extracellular" evidence="2">
    <location>
        <begin position="59"/>
        <end position="424"/>
    </location>
</feature>
<feature type="transmembrane region" description="Helical" evidence="2">
    <location>
        <begin position="425"/>
        <end position="445"/>
    </location>
</feature>
<feature type="topological domain" description="Cytoplasmic" evidence="2">
    <location>
        <begin position="446"/>
        <end position="485"/>
    </location>
</feature>
<feature type="binding site" evidence="2">
    <location>
        <position position="57"/>
    </location>
    <ligand>
        <name>Zn(2+)</name>
        <dbReference type="ChEBI" id="CHEBI:29105"/>
        <label>1</label>
    </ligand>
</feature>
<feature type="binding site" evidence="2">
    <location>
        <position position="447"/>
    </location>
    <ligand>
        <name>Zn(2+)</name>
        <dbReference type="ChEBI" id="CHEBI:29105"/>
        <label>2</label>
    </ligand>
</feature>
<feature type="binding site" evidence="2">
    <location>
        <position position="449"/>
    </location>
    <ligand>
        <name>Zn(2+)</name>
        <dbReference type="ChEBI" id="CHEBI:29105"/>
        <label>2</label>
    </ligand>
</feature>
<feature type="binding site" evidence="2">
    <location>
        <position position="455"/>
    </location>
    <ligand>
        <name>Zn(2+)</name>
        <dbReference type="ChEBI" id="CHEBI:29105"/>
        <label>2</label>
    </ligand>
</feature>
<feature type="binding site" evidence="2">
    <location>
        <position position="459"/>
    </location>
    <ligand>
        <name>Zn(2+)</name>
        <dbReference type="ChEBI" id="CHEBI:29105"/>
        <label>1</label>
    </ligand>
</feature>
<feature type="binding site" evidence="2">
    <location>
        <position position="467"/>
    </location>
    <ligand>
        <name>Zn(2+)</name>
        <dbReference type="ChEBI" id="CHEBI:29105"/>
        <label>1</label>
    </ligand>
</feature>
<feature type="binding site" evidence="2">
    <location>
        <position position="469"/>
    </location>
    <ligand>
        <name>Zn(2+)</name>
        <dbReference type="ChEBI" id="CHEBI:29105"/>
        <label>1</label>
    </ligand>
</feature>
<feature type="site" description="Important for GP-C-mediated membrane fusion" evidence="1">
    <location>
        <position position="33"/>
    </location>
</feature>
<feature type="site" description="Cleavage; by host signal peptidase" evidence="2">
    <location>
        <begin position="58"/>
        <end position="59"/>
    </location>
</feature>
<feature type="site" description="Cleavage; by host MBTPS1" evidence="2">
    <location>
        <begin position="251"/>
        <end position="252"/>
    </location>
</feature>
<feature type="lipid moiety-binding region" description="N-myristoyl glycine; by host" evidence="2">
    <location>
        <position position="2"/>
    </location>
</feature>
<feature type="glycosylation site" description="N-linked (GlcNAc...) asparagine; by host" evidence="2">
    <location>
        <position position="88"/>
    </location>
</feature>
<feature type="glycosylation site" description="N-linked (GlcNAc...) asparagine; by host" evidence="2">
    <location>
        <position position="128"/>
    </location>
</feature>
<feature type="glycosylation site" description="N-linked (GlcNAc...) asparagine; by host" evidence="2">
    <location>
        <position position="179"/>
    </location>
</feature>
<feature type="glycosylation site" description="N-linked (GlcNAc...) asparagine; by host" evidence="2">
    <location>
        <position position="218"/>
    </location>
</feature>
<feature type="glycosylation site" description="N-linked (GlcNAc...) asparagine; by host" evidence="2">
    <location>
        <position position="357"/>
    </location>
</feature>
<feature type="glycosylation site" description="N-linked (GlcNAc...) asparagine; by host" evidence="2">
    <location>
        <position position="365"/>
    </location>
</feature>
<feature type="glycosylation site" description="N-linked (GlcNAc...) asparagine; by host" evidence="2">
    <location>
        <position position="382"/>
    </location>
</feature>
<feature type="glycosylation site" description="N-linked (GlcNAc...) asparagine; by host" evidence="2">
    <location>
        <position position="387"/>
    </location>
</feature>
<feature type="disulfide bond" evidence="2">
    <location>
        <begin position="85"/>
        <end position="225"/>
    </location>
</feature>
<feature type="disulfide bond" evidence="2">
    <location>
        <begin position="271"/>
        <end position="284"/>
    </location>
</feature>
<feature type="disulfide bond" evidence="2">
    <location>
        <begin position="293"/>
        <end position="302"/>
    </location>
</feature>
<feature type="disulfide bond" evidence="2">
    <location>
        <begin position="356"/>
        <end position="377"/>
    </location>
</feature>
<organism>
    <name type="scientific">Tamiami mammarenavirus (isolate Rat/United States/W 10777/1964)</name>
    <name type="common">TAMV</name>
    <dbReference type="NCBI Taxonomy" id="3052329"/>
    <lineage>
        <taxon>Viruses</taxon>
        <taxon>Riboviria</taxon>
        <taxon>Orthornavirae</taxon>
        <taxon>Negarnaviricota</taxon>
        <taxon>Polyploviricotina</taxon>
        <taxon>Ellioviricetes</taxon>
        <taxon>Bunyavirales</taxon>
        <taxon>Arenaviridae</taxon>
        <taxon>Mammarenavirus</taxon>
    </lineage>
</organism>
<accession>Q8AYY5</accession>
<gene>
    <name evidence="2" type="primary">GPC</name>
    <name type="synonym">GP-C</name>
</gene>
<protein>
    <recommendedName>
        <fullName evidence="2">Pre-glycoprotein polyprotein GP complex</fullName>
        <shortName evidence="2">Pre-GP-C</shortName>
    </recommendedName>
    <component>
        <recommendedName>
            <fullName evidence="2">Stable signal peptide</fullName>
            <shortName evidence="2">SSP</shortName>
        </recommendedName>
    </component>
    <component>
        <recommendedName>
            <fullName evidence="2">Glycoprotein G1</fullName>
            <shortName evidence="2">GP1</shortName>
        </recommendedName>
    </component>
    <component>
        <recommendedName>
            <fullName evidence="2">Glycoprotein G2</fullName>
            <shortName evidence="2">GP2</shortName>
        </recommendedName>
    </component>
</protein>
<dbReference type="EMBL" id="AF485263">
    <property type="protein sequence ID" value="AAN09948.1"/>
    <property type="molecule type" value="Genomic_RNA"/>
</dbReference>
<dbReference type="EMBL" id="AF512828">
    <property type="protein sequence ID" value="AAN32955.1"/>
    <property type="molecule type" value="Genomic_RNA"/>
</dbReference>
<dbReference type="RefSeq" id="YP_001911115.1">
    <property type="nucleotide sequence ID" value="NC_010701.1"/>
</dbReference>
<dbReference type="SMR" id="Q8AYY5"/>
<dbReference type="GlyCosmos" id="Q8AYY5">
    <property type="glycosylation" value="11 sites, No reported glycans"/>
</dbReference>
<dbReference type="GeneID" id="6301274"/>
<dbReference type="KEGG" id="vg:6301274"/>
<dbReference type="OrthoDB" id="4838at10239"/>
<dbReference type="Proteomes" id="UP000008034">
    <property type="component" value="Genome"/>
</dbReference>
<dbReference type="Proteomes" id="UP000172871">
    <property type="component" value="Genome"/>
</dbReference>
<dbReference type="GO" id="GO:0044167">
    <property type="term" value="C:host cell endoplasmic reticulum membrane"/>
    <property type="evidence" value="ECO:0007669"/>
    <property type="project" value="UniProtKB-SubCell"/>
</dbReference>
<dbReference type="GO" id="GO:0044178">
    <property type="term" value="C:host cell Golgi membrane"/>
    <property type="evidence" value="ECO:0007669"/>
    <property type="project" value="UniProtKB-SubCell"/>
</dbReference>
<dbReference type="GO" id="GO:0020002">
    <property type="term" value="C:host cell plasma membrane"/>
    <property type="evidence" value="ECO:0007669"/>
    <property type="project" value="UniProtKB-SubCell"/>
</dbReference>
<dbReference type="GO" id="GO:0016020">
    <property type="term" value="C:membrane"/>
    <property type="evidence" value="ECO:0007669"/>
    <property type="project" value="UniProtKB-UniRule"/>
</dbReference>
<dbReference type="GO" id="GO:0019031">
    <property type="term" value="C:viral envelope"/>
    <property type="evidence" value="ECO:0007669"/>
    <property type="project" value="UniProtKB-UniRule"/>
</dbReference>
<dbReference type="GO" id="GO:0055036">
    <property type="term" value="C:virion membrane"/>
    <property type="evidence" value="ECO:0007669"/>
    <property type="project" value="UniProtKB-SubCell"/>
</dbReference>
<dbReference type="GO" id="GO:0046872">
    <property type="term" value="F:metal ion binding"/>
    <property type="evidence" value="ECO:0007669"/>
    <property type="project" value="UniProtKB-KW"/>
</dbReference>
<dbReference type="GO" id="GO:0039654">
    <property type="term" value="P:fusion of virus membrane with host endosome membrane"/>
    <property type="evidence" value="ECO:0007669"/>
    <property type="project" value="UniProtKB-UniRule"/>
</dbReference>
<dbReference type="GO" id="GO:0019065">
    <property type="term" value="P:receptor-mediated endocytosis of virus by host cell"/>
    <property type="evidence" value="ECO:0007669"/>
    <property type="project" value="UniProtKB-UniRule"/>
</dbReference>
<dbReference type="GO" id="GO:0019062">
    <property type="term" value="P:virion attachment to host cell"/>
    <property type="evidence" value="ECO:0007669"/>
    <property type="project" value="UniProtKB-UniRule"/>
</dbReference>
<dbReference type="Gene3D" id="6.10.140.1590">
    <property type="match status" value="1"/>
</dbReference>
<dbReference type="Gene3D" id="2.20.28.180">
    <property type="entry name" value="Arenavirus glycoprotein, zinc binding domain"/>
    <property type="match status" value="1"/>
</dbReference>
<dbReference type="HAMAP" id="MF_04084">
    <property type="entry name" value="ARENA_GPC"/>
    <property type="match status" value="1"/>
</dbReference>
<dbReference type="InterPro" id="IPR001535">
    <property type="entry name" value="Arena_glycoprot"/>
</dbReference>
<dbReference type="InterPro" id="IPR043015">
    <property type="entry name" value="Arena_glycoprot_zinc-bd"/>
</dbReference>
<dbReference type="Pfam" id="PF00798">
    <property type="entry name" value="Arena_glycoprot"/>
    <property type="match status" value="1"/>
</dbReference>
<dbReference type="PIRSF" id="PIRSF004028">
    <property type="entry name" value="GPC_ArenaV"/>
    <property type="match status" value="1"/>
</dbReference>
<reference key="1">
    <citation type="journal article" date="2002" name="Virology">
        <title>High genetic divergence and recombination in Arenaviruses from the Americas.</title>
        <authorList>
            <person name="Archer A.M."/>
            <person name="Rico-Hesse R."/>
        </authorList>
    </citation>
    <scope>NUCLEOTIDE SEQUENCE [GENOMIC RNA]</scope>
</reference>
<reference key="2">
    <citation type="journal article" date="2002" name="Biochem. Biophys. Res. Commun.">
        <title>Phylogeny of New World arenaviruses based on the complete coding sequences of the small genomic segment identified an evolutionary lineage produced by intrasegmental recombination.</title>
        <authorList>
            <person name="Charrel R.N."/>
            <person name="Feldmann H."/>
            <person name="Fulhorst C.F."/>
            <person name="Khelifa R."/>
            <person name="de Chesse R."/>
            <person name="de Lamballerie X."/>
        </authorList>
    </citation>
    <scope>NUCLEOTIDE SEQUENCE [GENOMIC RNA]</scope>
</reference>
<reference key="3">
    <citation type="journal article" date="2008" name="Curr. Opin. Microbiol.">
        <title>Phylogeny of the genus Arenavirus.</title>
        <authorList>
            <person name="Charrel R.N."/>
            <person name="de Lamballerie X."/>
            <person name="Emonet S."/>
        </authorList>
    </citation>
    <scope>NUCLEOTIDE SEQUENCE [GENOMIC RNA]</scope>
</reference>
<proteinExistence type="inferred from homology"/>
<sequence>MGQLISFFGEIPTILQEALNIALIAVSIIATIKGVVNVWKSGLIQLLMFVMLAGRSCSVQIGHHLELEHIILNSSSILPFTPTLCKLNKTYFLVRGPFQAHWGVDLAIGSTTVAVENATKTYTLKSKNFTGCFEGNPDPDSAALLVTWLFNSLHHDYKNDPSILCERVSGENSFRFQINISEPEYCEKILSRMANLFGSFENYCLNNRHIKKLIIIRNLTWSQQCHENHMSAMQLITSNIHTQVVRARRILSFFTWSLSDAVGNDMPGGYCLEKWMLIASQLKCFGNTAVAKCNLNHDSEFCDMLRLFDFNRKAIETLQNKTRSQLNIAINAINSLISDNLLMKNRVKELMDIPFCNYTKFWYVNHTKLNHHSLPRCWLVKNGSYLNESEFRNDWLLESDHLISEILSREYEERQGRTPLSLVDVCFWSTLFYTASIFLHLIRIPTHRHIVGEGCPKPHRLRADSTCACGLYKQKRRPLKWVRSN</sequence>